<keyword id="KW-0472">Membrane</keyword>
<keyword id="KW-0602">Photosynthesis</keyword>
<keyword id="KW-0604">Photosystem II</keyword>
<keyword id="KW-1185">Reference proteome</keyword>
<keyword id="KW-0793">Thylakoid</keyword>
<keyword id="KW-0812">Transmembrane</keyword>
<keyword id="KW-1133">Transmembrane helix</keyword>
<organism>
    <name type="scientific">Rippkaea orientalis (strain PCC 8801 / RF-1)</name>
    <name type="common">Cyanothece sp. (strain PCC 8801)</name>
    <dbReference type="NCBI Taxonomy" id="41431"/>
    <lineage>
        <taxon>Bacteria</taxon>
        <taxon>Bacillati</taxon>
        <taxon>Cyanobacteriota</taxon>
        <taxon>Cyanophyceae</taxon>
        <taxon>Oscillatoriophycideae</taxon>
        <taxon>Chroococcales</taxon>
        <taxon>Aphanothecaceae</taxon>
        <taxon>Rippkaea</taxon>
        <taxon>Rippkaea orientalis</taxon>
    </lineage>
</organism>
<name>PSBH_RIPO1</name>
<protein>
    <recommendedName>
        <fullName evidence="1">Photosystem II reaction center protein H</fullName>
        <shortName evidence="1">PSII-H</shortName>
    </recommendedName>
</protein>
<sequence length="64" mass="7003">MAQRTGLGDLLRPLNSEYGKVVPGWGTTPLMGVFMGLFLVFLLIILQIYNSSLILEGFTVTWGG</sequence>
<comment type="function">
    <text evidence="1">One of the components of the core complex of photosystem II (PSII), required for its stability and/or assembly. PSII is a light-driven water:plastoquinone oxidoreductase that uses light energy to abstract electrons from H(2)O, generating O(2) and a proton gradient subsequently used for ATP formation. It consists of a core antenna complex that captures photons, and an electron transfer chain that converts photonic excitation into a charge separation.</text>
</comment>
<comment type="subunit">
    <text evidence="1">PSII is composed of 1 copy each of membrane proteins PsbA, PsbB, PsbC, PsbD, PsbE, PsbF, PsbH, PsbI, PsbJ, PsbK, PsbL, PsbM, PsbT, PsbX, PsbY, PsbZ, Psb30/Ycf12, peripheral proteins PsbO, CyanoQ (PsbQ), PsbU, PsbV and a large number of cofactors. It forms dimeric complexes.</text>
</comment>
<comment type="subcellular location">
    <subcellularLocation>
        <location evidence="1">Cellular thylakoid membrane</location>
        <topology evidence="1">Single-pass membrane protein</topology>
    </subcellularLocation>
</comment>
<comment type="similarity">
    <text evidence="1">Belongs to the PsbH family.</text>
</comment>
<feature type="chain" id="PRO_1000192871" description="Photosystem II reaction center protein H">
    <location>
        <begin position="1"/>
        <end position="64"/>
    </location>
</feature>
<feature type="transmembrane region" description="Helical" evidence="1">
    <location>
        <begin position="29"/>
        <end position="49"/>
    </location>
</feature>
<reference key="1">
    <citation type="journal article" date="2011" name="MBio">
        <title>Novel metabolic attributes of the genus Cyanothece, comprising a group of unicellular nitrogen-fixing Cyanobacteria.</title>
        <authorList>
            <person name="Bandyopadhyay A."/>
            <person name="Elvitigala T."/>
            <person name="Welsh E."/>
            <person name="Stockel J."/>
            <person name="Liberton M."/>
            <person name="Min H."/>
            <person name="Sherman L.A."/>
            <person name="Pakrasi H.B."/>
        </authorList>
    </citation>
    <scope>NUCLEOTIDE SEQUENCE [LARGE SCALE GENOMIC DNA]</scope>
    <source>
        <strain>PCC 8801 / RF-1</strain>
    </source>
</reference>
<evidence type="ECO:0000255" key="1">
    <source>
        <dbReference type="HAMAP-Rule" id="MF_00752"/>
    </source>
</evidence>
<accession>B7JW07</accession>
<dbReference type="EMBL" id="CP001287">
    <property type="protein sequence ID" value="ACK65696.1"/>
    <property type="molecule type" value="Genomic_DNA"/>
</dbReference>
<dbReference type="RefSeq" id="WP_012594969.1">
    <property type="nucleotide sequence ID" value="NC_011726.1"/>
</dbReference>
<dbReference type="SMR" id="B7JW07"/>
<dbReference type="STRING" id="41431.PCC8801_1645"/>
<dbReference type="KEGG" id="cyp:PCC8801_1645"/>
<dbReference type="eggNOG" id="ENOG50332MV">
    <property type="taxonomic scope" value="Bacteria"/>
</dbReference>
<dbReference type="HOGENOM" id="CLU_190203_0_0_3"/>
<dbReference type="Proteomes" id="UP000008204">
    <property type="component" value="Chromosome"/>
</dbReference>
<dbReference type="GO" id="GO:0009523">
    <property type="term" value="C:photosystem II"/>
    <property type="evidence" value="ECO:0007669"/>
    <property type="project" value="UniProtKB-KW"/>
</dbReference>
<dbReference type="GO" id="GO:0031676">
    <property type="term" value="C:plasma membrane-derived thylakoid membrane"/>
    <property type="evidence" value="ECO:0007669"/>
    <property type="project" value="UniProtKB-SubCell"/>
</dbReference>
<dbReference type="GO" id="GO:0042301">
    <property type="term" value="F:phosphate ion binding"/>
    <property type="evidence" value="ECO:0007669"/>
    <property type="project" value="InterPro"/>
</dbReference>
<dbReference type="GO" id="GO:0015979">
    <property type="term" value="P:photosynthesis"/>
    <property type="evidence" value="ECO:0007669"/>
    <property type="project" value="UniProtKB-UniRule"/>
</dbReference>
<dbReference type="GO" id="GO:0050821">
    <property type="term" value="P:protein stabilization"/>
    <property type="evidence" value="ECO:0007669"/>
    <property type="project" value="InterPro"/>
</dbReference>
<dbReference type="Gene3D" id="1.20.5.880">
    <property type="entry name" value="Photosystem II reaction center protein H"/>
    <property type="match status" value="1"/>
</dbReference>
<dbReference type="HAMAP" id="MF_00752">
    <property type="entry name" value="PSII_PsbH"/>
    <property type="match status" value="1"/>
</dbReference>
<dbReference type="InterPro" id="IPR001056">
    <property type="entry name" value="PSII_PsbH"/>
</dbReference>
<dbReference type="InterPro" id="IPR036863">
    <property type="entry name" value="PSII_PsbH_sf"/>
</dbReference>
<dbReference type="NCBIfam" id="NF002728">
    <property type="entry name" value="PRK02624.1"/>
    <property type="match status" value="1"/>
</dbReference>
<dbReference type="PANTHER" id="PTHR34469">
    <property type="entry name" value="PHOTOSYSTEM II REACTION CENTER PROTEIN H"/>
    <property type="match status" value="1"/>
</dbReference>
<dbReference type="PANTHER" id="PTHR34469:SF4">
    <property type="entry name" value="PHOTOSYSTEM II REACTION CENTER PROTEIN H"/>
    <property type="match status" value="1"/>
</dbReference>
<dbReference type="Pfam" id="PF00737">
    <property type="entry name" value="PsbH"/>
    <property type="match status" value="1"/>
</dbReference>
<dbReference type="SUPFAM" id="SSF161025">
    <property type="entry name" value="Photosystem II 10 kDa phosphoprotein PsbH"/>
    <property type="match status" value="1"/>
</dbReference>
<proteinExistence type="inferred from homology"/>
<gene>
    <name evidence="1" type="primary">psbH</name>
    <name type="ordered locus">PCC8801_1645</name>
</gene>